<accession>A8FKW8</accession>
<protein>
    <recommendedName>
        <fullName evidence="1">Porphobilinogen deaminase</fullName>
        <shortName evidence="1">PBG</shortName>
        <ecNumber evidence="1">2.5.1.61</ecNumber>
    </recommendedName>
    <alternativeName>
        <fullName evidence="1">Hydroxymethylbilane synthase</fullName>
        <shortName evidence="1">HMBS</shortName>
    </alternativeName>
    <alternativeName>
        <fullName evidence="1">Pre-uroporphyrinogen synthase</fullName>
    </alternativeName>
</protein>
<organism>
    <name type="scientific">Campylobacter jejuni subsp. jejuni serotype O:6 (strain 81116 / NCTC 11828)</name>
    <dbReference type="NCBI Taxonomy" id="407148"/>
    <lineage>
        <taxon>Bacteria</taxon>
        <taxon>Pseudomonadati</taxon>
        <taxon>Campylobacterota</taxon>
        <taxon>Epsilonproteobacteria</taxon>
        <taxon>Campylobacterales</taxon>
        <taxon>Campylobacteraceae</taxon>
        <taxon>Campylobacter</taxon>
    </lineage>
</organism>
<feature type="chain" id="PRO_1000071887" description="Porphobilinogen deaminase">
    <location>
        <begin position="1"/>
        <end position="307"/>
    </location>
</feature>
<feature type="modified residue" description="S-(dipyrrolylmethanemethyl)cysteine" evidence="1">
    <location>
        <position position="239"/>
    </location>
</feature>
<proteinExistence type="inferred from homology"/>
<evidence type="ECO:0000255" key="1">
    <source>
        <dbReference type="HAMAP-Rule" id="MF_00260"/>
    </source>
</evidence>
<sequence>MKLIIATRKSQLALWQSEHVAQILKNTHQIEVLLEGFKTKGDVLLDSPLAKIGGKGLFTKELEESMLRKEAHLAVHSLKDVPSFFPRGLVLAAVSKREQSNDAMLSQNYKDFLSLPKGAKIGTTSLRRKMQLLLLRPDLEIISLRGNVNSRIEKLKNNDFDAIILAMAGIKRLNLDKQVNFVYEFSKDELIPAASQGALGIESINDEKILELLKCLNDENALIETSIEREFIATLEGGCQVPIGINAELLGDEICVRAVLGLPDGSEILKDKRMIKKNDFKGFGESLAKEFIAKGAKELLKKAESMI</sequence>
<keyword id="KW-0627">Porphyrin biosynthesis</keyword>
<keyword id="KW-0808">Transferase</keyword>
<dbReference type="EC" id="2.5.1.61" evidence="1"/>
<dbReference type="EMBL" id="CP000814">
    <property type="protein sequence ID" value="ABV52105.1"/>
    <property type="molecule type" value="Genomic_DNA"/>
</dbReference>
<dbReference type="RefSeq" id="WP_002866427.1">
    <property type="nucleotide sequence ID" value="NC_009839.1"/>
</dbReference>
<dbReference type="SMR" id="A8FKW8"/>
<dbReference type="KEGG" id="cju:C8J_0506"/>
<dbReference type="HOGENOM" id="CLU_019704_1_0_7"/>
<dbReference type="UniPathway" id="UPA00251">
    <property type="reaction ID" value="UER00319"/>
</dbReference>
<dbReference type="GO" id="GO:0005737">
    <property type="term" value="C:cytoplasm"/>
    <property type="evidence" value="ECO:0007669"/>
    <property type="project" value="TreeGrafter"/>
</dbReference>
<dbReference type="GO" id="GO:0004418">
    <property type="term" value="F:hydroxymethylbilane synthase activity"/>
    <property type="evidence" value="ECO:0007669"/>
    <property type="project" value="UniProtKB-UniRule"/>
</dbReference>
<dbReference type="GO" id="GO:0006782">
    <property type="term" value="P:protoporphyrinogen IX biosynthetic process"/>
    <property type="evidence" value="ECO:0007669"/>
    <property type="project" value="UniProtKB-UniRule"/>
</dbReference>
<dbReference type="CDD" id="cd13646">
    <property type="entry name" value="PBP2_EcHMBS_like"/>
    <property type="match status" value="1"/>
</dbReference>
<dbReference type="FunFam" id="3.40.190.10:FF:000005">
    <property type="entry name" value="Porphobilinogen deaminase"/>
    <property type="match status" value="1"/>
</dbReference>
<dbReference type="FunFam" id="3.40.190.10:FF:000086">
    <property type="entry name" value="Probable porphobilinogen deaminase"/>
    <property type="match status" value="1"/>
</dbReference>
<dbReference type="Gene3D" id="3.40.190.10">
    <property type="entry name" value="Periplasmic binding protein-like II"/>
    <property type="match status" value="2"/>
</dbReference>
<dbReference type="Gene3D" id="3.30.160.40">
    <property type="entry name" value="Porphobilinogen deaminase, C-terminal domain"/>
    <property type="match status" value="1"/>
</dbReference>
<dbReference type="HAMAP" id="MF_00260">
    <property type="entry name" value="Porphobil_deam"/>
    <property type="match status" value="1"/>
</dbReference>
<dbReference type="InterPro" id="IPR000860">
    <property type="entry name" value="HemC"/>
</dbReference>
<dbReference type="InterPro" id="IPR022419">
    <property type="entry name" value="Porphobilin_deaminase_cofac_BS"/>
</dbReference>
<dbReference type="InterPro" id="IPR022417">
    <property type="entry name" value="Porphobilin_deaminase_N"/>
</dbReference>
<dbReference type="InterPro" id="IPR022418">
    <property type="entry name" value="Porphobilinogen_deaminase_C"/>
</dbReference>
<dbReference type="InterPro" id="IPR036803">
    <property type="entry name" value="Porphobilinogen_deaminase_C_sf"/>
</dbReference>
<dbReference type="NCBIfam" id="TIGR00212">
    <property type="entry name" value="hemC"/>
    <property type="match status" value="1"/>
</dbReference>
<dbReference type="PANTHER" id="PTHR11557">
    <property type="entry name" value="PORPHOBILINOGEN DEAMINASE"/>
    <property type="match status" value="1"/>
</dbReference>
<dbReference type="PANTHER" id="PTHR11557:SF0">
    <property type="entry name" value="PORPHOBILINOGEN DEAMINASE"/>
    <property type="match status" value="1"/>
</dbReference>
<dbReference type="Pfam" id="PF01379">
    <property type="entry name" value="Porphobil_deam"/>
    <property type="match status" value="1"/>
</dbReference>
<dbReference type="Pfam" id="PF03900">
    <property type="entry name" value="Porphobil_deamC"/>
    <property type="match status" value="1"/>
</dbReference>
<dbReference type="PIRSF" id="PIRSF001438">
    <property type="entry name" value="4pyrrol_synth_OHMeBilane_synth"/>
    <property type="match status" value="1"/>
</dbReference>
<dbReference type="PRINTS" id="PR00151">
    <property type="entry name" value="PORPHBDMNASE"/>
</dbReference>
<dbReference type="SUPFAM" id="SSF53850">
    <property type="entry name" value="Periplasmic binding protein-like II"/>
    <property type="match status" value="1"/>
</dbReference>
<dbReference type="SUPFAM" id="SSF54782">
    <property type="entry name" value="Porphobilinogen deaminase (hydroxymethylbilane synthase), C-terminal domain"/>
    <property type="match status" value="1"/>
</dbReference>
<dbReference type="PROSITE" id="PS00533">
    <property type="entry name" value="PORPHOBILINOGEN_DEAM"/>
    <property type="match status" value="1"/>
</dbReference>
<gene>
    <name evidence="1" type="primary">hemC</name>
    <name type="ordered locus">C8J_0506</name>
</gene>
<comment type="function">
    <text evidence="1">Tetrapolymerization of the monopyrrole PBG into the hydroxymethylbilane pre-uroporphyrinogen in several discrete steps.</text>
</comment>
<comment type="catalytic activity">
    <reaction evidence="1">
        <text>4 porphobilinogen + H2O = hydroxymethylbilane + 4 NH4(+)</text>
        <dbReference type="Rhea" id="RHEA:13185"/>
        <dbReference type="ChEBI" id="CHEBI:15377"/>
        <dbReference type="ChEBI" id="CHEBI:28938"/>
        <dbReference type="ChEBI" id="CHEBI:57845"/>
        <dbReference type="ChEBI" id="CHEBI:58126"/>
        <dbReference type="EC" id="2.5.1.61"/>
    </reaction>
</comment>
<comment type="cofactor">
    <cofactor evidence="1">
        <name>dipyrromethane</name>
        <dbReference type="ChEBI" id="CHEBI:60342"/>
    </cofactor>
    <text evidence="1">Binds 1 dipyrromethane group covalently.</text>
</comment>
<comment type="pathway">
    <text evidence="1">Porphyrin-containing compound metabolism; protoporphyrin-IX biosynthesis; coproporphyrinogen-III from 5-aminolevulinate: step 2/4.</text>
</comment>
<comment type="subunit">
    <text evidence="1">Monomer.</text>
</comment>
<comment type="miscellaneous">
    <text evidence="1">The porphobilinogen subunits are added to the dipyrromethane group.</text>
</comment>
<comment type="similarity">
    <text evidence="1">Belongs to the HMBS family.</text>
</comment>
<reference key="1">
    <citation type="journal article" date="2007" name="J. Bacteriol.">
        <title>The complete genome sequence of Campylobacter jejuni strain 81116 (NCTC11828).</title>
        <authorList>
            <person name="Pearson B.M."/>
            <person name="Gaskin D.J.H."/>
            <person name="Segers R.P.A.M."/>
            <person name="Wells J.M."/>
            <person name="Nuijten P.J.M."/>
            <person name="van Vliet A.H.M."/>
        </authorList>
    </citation>
    <scope>NUCLEOTIDE SEQUENCE [LARGE SCALE GENOMIC DNA]</scope>
    <source>
        <strain>81116 / NCTC 11828</strain>
    </source>
</reference>
<name>HEM3_CAMJ8</name>